<reference key="1">
    <citation type="submission" date="2006-08" db="EMBL/GenBank/DDBJ databases">
        <title>Complete sequence of Alkalilimnicola ehrilichei MLHE-1.</title>
        <authorList>
            <person name="Copeland A."/>
            <person name="Lucas S."/>
            <person name="Lapidus A."/>
            <person name="Barry K."/>
            <person name="Detter J.C."/>
            <person name="Glavina del Rio T."/>
            <person name="Hammon N."/>
            <person name="Israni S."/>
            <person name="Dalin E."/>
            <person name="Tice H."/>
            <person name="Pitluck S."/>
            <person name="Sims D."/>
            <person name="Brettin T."/>
            <person name="Bruce D."/>
            <person name="Han C."/>
            <person name="Tapia R."/>
            <person name="Gilna P."/>
            <person name="Schmutz J."/>
            <person name="Larimer F."/>
            <person name="Land M."/>
            <person name="Hauser L."/>
            <person name="Kyrpides N."/>
            <person name="Mikhailova N."/>
            <person name="Oremland R.S."/>
            <person name="Hoeft S.E."/>
            <person name="Switzer-Blum J."/>
            <person name="Kulp T."/>
            <person name="King G."/>
            <person name="Tabita R."/>
            <person name="Witte B."/>
            <person name="Santini J.M."/>
            <person name="Basu P."/>
            <person name="Hollibaugh J.T."/>
            <person name="Xie G."/>
            <person name="Stolz J.F."/>
            <person name="Richardson P."/>
        </authorList>
    </citation>
    <scope>NUCLEOTIDE SEQUENCE [LARGE SCALE GENOMIC DNA]</scope>
    <source>
        <strain>ATCC BAA-1101 / DSM 17681 / MLHE-1</strain>
    </source>
</reference>
<protein>
    <recommendedName>
        <fullName evidence="1">Dihydroorotate dehydrogenase (quinone)</fullName>
        <ecNumber evidence="1">1.3.5.2</ecNumber>
    </recommendedName>
    <alternativeName>
        <fullName evidence="1">DHOdehase</fullName>
        <shortName evidence="1">DHOD</shortName>
        <shortName evidence="1">DHODase</shortName>
    </alternativeName>
    <alternativeName>
        <fullName evidence="1">Dihydroorotate oxidase</fullName>
    </alternativeName>
</protein>
<gene>
    <name evidence="1" type="primary">pyrD</name>
    <name type="ordered locus">Mlg_1463</name>
</gene>
<sequence>MYSLIRPLLMRMDAERSHEFSLAWMDRLARLGLGRLLCGHRLPDMPRRVMGLTFANPVGLAAGLDKNGEHLEALGHVGFGFIEVGTVTPRPQPGNPEPRLFRLPAHEAIINRMGFNNQGVDALVQRLRVTRYQGVLGVNIGKNKDTPTERATDDYLSCLQKVYPYADYVAVNVSSPNTPGLRDLQGGELLEALLGRLTHLRGVLAREYGRYVPLVVKIAPDMDEAQRAHFCQQVLRYGIDGVAATNTTLSRDGVEDDPLAREQGGLSGAPLRPRAQAVLEELGQRLGHRVPLIGVGGIMSGADAQARMAAGADLLQIYSGFIYRGPLLLEELLKAVAPEH</sequence>
<accession>Q0A8M5</accession>
<keyword id="KW-1003">Cell membrane</keyword>
<keyword id="KW-0285">Flavoprotein</keyword>
<keyword id="KW-0288">FMN</keyword>
<keyword id="KW-0472">Membrane</keyword>
<keyword id="KW-0560">Oxidoreductase</keyword>
<keyword id="KW-0665">Pyrimidine biosynthesis</keyword>
<keyword id="KW-1185">Reference proteome</keyword>
<proteinExistence type="inferred from homology"/>
<evidence type="ECO:0000255" key="1">
    <source>
        <dbReference type="HAMAP-Rule" id="MF_00225"/>
    </source>
</evidence>
<name>PYRD_ALKEH</name>
<organism>
    <name type="scientific">Alkalilimnicola ehrlichii (strain ATCC BAA-1101 / DSM 17681 / MLHE-1)</name>
    <dbReference type="NCBI Taxonomy" id="187272"/>
    <lineage>
        <taxon>Bacteria</taxon>
        <taxon>Pseudomonadati</taxon>
        <taxon>Pseudomonadota</taxon>
        <taxon>Gammaproteobacteria</taxon>
        <taxon>Chromatiales</taxon>
        <taxon>Ectothiorhodospiraceae</taxon>
        <taxon>Alkalilimnicola</taxon>
    </lineage>
</organism>
<dbReference type="EC" id="1.3.5.2" evidence="1"/>
<dbReference type="EMBL" id="CP000453">
    <property type="protein sequence ID" value="ABI56812.1"/>
    <property type="molecule type" value="Genomic_DNA"/>
</dbReference>
<dbReference type="RefSeq" id="WP_011629207.1">
    <property type="nucleotide sequence ID" value="NC_008340.1"/>
</dbReference>
<dbReference type="SMR" id="Q0A8M5"/>
<dbReference type="KEGG" id="aeh:Mlg_1463"/>
<dbReference type="eggNOG" id="COG0167">
    <property type="taxonomic scope" value="Bacteria"/>
</dbReference>
<dbReference type="HOGENOM" id="CLU_013640_2_0_6"/>
<dbReference type="OrthoDB" id="9802377at2"/>
<dbReference type="UniPathway" id="UPA00070">
    <property type="reaction ID" value="UER00946"/>
</dbReference>
<dbReference type="Proteomes" id="UP000001962">
    <property type="component" value="Chromosome"/>
</dbReference>
<dbReference type="GO" id="GO:0005737">
    <property type="term" value="C:cytoplasm"/>
    <property type="evidence" value="ECO:0007669"/>
    <property type="project" value="InterPro"/>
</dbReference>
<dbReference type="GO" id="GO:0005886">
    <property type="term" value="C:plasma membrane"/>
    <property type="evidence" value="ECO:0007669"/>
    <property type="project" value="UniProtKB-SubCell"/>
</dbReference>
<dbReference type="GO" id="GO:0106430">
    <property type="term" value="F:dihydroorotate dehydrogenase (quinone) activity"/>
    <property type="evidence" value="ECO:0007669"/>
    <property type="project" value="UniProtKB-EC"/>
</dbReference>
<dbReference type="GO" id="GO:0006207">
    <property type="term" value="P:'de novo' pyrimidine nucleobase biosynthetic process"/>
    <property type="evidence" value="ECO:0007669"/>
    <property type="project" value="InterPro"/>
</dbReference>
<dbReference type="GO" id="GO:0044205">
    <property type="term" value="P:'de novo' UMP biosynthetic process"/>
    <property type="evidence" value="ECO:0007669"/>
    <property type="project" value="UniProtKB-UniRule"/>
</dbReference>
<dbReference type="CDD" id="cd04738">
    <property type="entry name" value="DHOD_2_like"/>
    <property type="match status" value="1"/>
</dbReference>
<dbReference type="Gene3D" id="3.20.20.70">
    <property type="entry name" value="Aldolase class I"/>
    <property type="match status" value="1"/>
</dbReference>
<dbReference type="HAMAP" id="MF_00225">
    <property type="entry name" value="DHO_dh_type2"/>
    <property type="match status" value="1"/>
</dbReference>
<dbReference type="InterPro" id="IPR013785">
    <property type="entry name" value="Aldolase_TIM"/>
</dbReference>
<dbReference type="InterPro" id="IPR050074">
    <property type="entry name" value="DHO_dehydrogenase"/>
</dbReference>
<dbReference type="InterPro" id="IPR012135">
    <property type="entry name" value="Dihydroorotate_DH_1_2"/>
</dbReference>
<dbReference type="InterPro" id="IPR005719">
    <property type="entry name" value="Dihydroorotate_DH_2"/>
</dbReference>
<dbReference type="InterPro" id="IPR005720">
    <property type="entry name" value="Dihydroorotate_DH_cat"/>
</dbReference>
<dbReference type="InterPro" id="IPR001295">
    <property type="entry name" value="Dihydroorotate_DH_CS"/>
</dbReference>
<dbReference type="NCBIfam" id="NF003644">
    <property type="entry name" value="PRK05286.1-1"/>
    <property type="match status" value="1"/>
</dbReference>
<dbReference type="NCBIfam" id="NF003645">
    <property type="entry name" value="PRK05286.1-2"/>
    <property type="match status" value="1"/>
</dbReference>
<dbReference type="NCBIfam" id="NF003646">
    <property type="entry name" value="PRK05286.1-4"/>
    <property type="match status" value="1"/>
</dbReference>
<dbReference type="NCBIfam" id="NF003652">
    <property type="entry name" value="PRK05286.2-5"/>
    <property type="match status" value="1"/>
</dbReference>
<dbReference type="NCBIfam" id="TIGR01036">
    <property type="entry name" value="pyrD_sub2"/>
    <property type="match status" value="1"/>
</dbReference>
<dbReference type="PANTHER" id="PTHR48109:SF4">
    <property type="entry name" value="DIHYDROOROTATE DEHYDROGENASE (QUINONE), MITOCHONDRIAL"/>
    <property type="match status" value="1"/>
</dbReference>
<dbReference type="PANTHER" id="PTHR48109">
    <property type="entry name" value="DIHYDROOROTATE DEHYDROGENASE (QUINONE), MITOCHONDRIAL-RELATED"/>
    <property type="match status" value="1"/>
</dbReference>
<dbReference type="Pfam" id="PF01180">
    <property type="entry name" value="DHO_dh"/>
    <property type="match status" value="1"/>
</dbReference>
<dbReference type="PIRSF" id="PIRSF000164">
    <property type="entry name" value="DHO_oxidase"/>
    <property type="match status" value="1"/>
</dbReference>
<dbReference type="SUPFAM" id="SSF51395">
    <property type="entry name" value="FMN-linked oxidoreductases"/>
    <property type="match status" value="1"/>
</dbReference>
<dbReference type="PROSITE" id="PS00911">
    <property type="entry name" value="DHODEHASE_1"/>
    <property type="match status" value="1"/>
</dbReference>
<dbReference type="PROSITE" id="PS00912">
    <property type="entry name" value="DHODEHASE_2"/>
    <property type="match status" value="1"/>
</dbReference>
<feature type="chain" id="PRO_0000336452" description="Dihydroorotate dehydrogenase (quinone)">
    <location>
        <begin position="1"/>
        <end position="340"/>
    </location>
</feature>
<feature type="active site" description="Nucleophile" evidence="1">
    <location>
        <position position="175"/>
    </location>
</feature>
<feature type="binding site" evidence="1">
    <location>
        <begin position="62"/>
        <end position="66"/>
    </location>
    <ligand>
        <name>FMN</name>
        <dbReference type="ChEBI" id="CHEBI:58210"/>
    </ligand>
</feature>
<feature type="binding site" evidence="1">
    <location>
        <position position="66"/>
    </location>
    <ligand>
        <name>substrate</name>
    </ligand>
</feature>
<feature type="binding site" evidence="1">
    <location>
        <position position="86"/>
    </location>
    <ligand>
        <name>FMN</name>
        <dbReference type="ChEBI" id="CHEBI:58210"/>
    </ligand>
</feature>
<feature type="binding site" evidence="1">
    <location>
        <begin position="111"/>
        <end position="115"/>
    </location>
    <ligand>
        <name>substrate</name>
    </ligand>
</feature>
<feature type="binding site" evidence="1">
    <location>
        <position position="139"/>
    </location>
    <ligand>
        <name>FMN</name>
        <dbReference type="ChEBI" id="CHEBI:58210"/>
    </ligand>
</feature>
<feature type="binding site" evidence="1">
    <location>
        <position position="172"/>
    </location>
    <ligand>
        <name>FMN</name>
        <dbReference type="ChEBI" id="CHEBI:58210"/>
    </ligand>
</feature>
<feature type="binding site" evidence="1">
    <location>
        <position position="172"/>
    </location>
    <ligand>
        <name>substrate</name>
    </ligand>
</feature>
<feature type="binding site" evidence="1">
    <location>
        <position position="177"/>
    </location>
    <ligand>
        <name>substrate</name>
    </ligand>
</feature>
<feature type="binding site" evidence="1">
    <location>
        <position position="217"/>
    </location>
    <ligand>
        <name>FMN</name>
        <dbReference type="ChEBI" id="CHEBI:58210"/>
    </ligand>
</feature>
<feature type="binding site" evidence="1">
    <location>
        <position position="245"/>
    </location>
    <ligand>
        <name>FMN</name>
        <dbReference type="ChEBI" id="CHEBI:58210"/>
    </ligand>
</feature>
<feature type="binding site" evidence="1">
    <location>
        <begin position="246"/>
        <end position="247"/>
    </location>
    <ligand>
        <name>substrate</name>
    </ligand>
</feature>
<feature type="binding site" evidence="1">
    <location>
        <position position="268"/>
    </location>
    <ligand>
        <name>FMN</name>
        <dbReference type="ChEBI" id="CHEBI:58210"/>
    </ligand>
</feature>
<feature type="binding site" evidence="1">
    <location>
        <position position="297"/>
    </location>
    <ligand>
        <name>FMN</name>
        <dbReference type="ChEBI" id="CHEBI:58210"/>
    </ligand>
</feature>
<feature type="binding site" evidence="1">
    <location>
        <begin position="318"/>
        <end position="319"/>
    </location>
    <ligand>
        <name>FMN</name>
        <dbReference type="ChEBI" id="CHEBI:58210"/>
    </ligand>
</feature>
<comment type="function">
    <text evidence="1">Catalyzes the conversion of dihydroorotate to orotate with quinone as electron acceptor.</text>
</comment>
<comment type="catalytic activity">
    <reaction evidence="1">
        <text>(S)-dihydroorotate + a quinone = orotate + a quinol</text>
        <dbReference type="Rhea" id="RHEA:30187"/>
        <dbReference type="ChEBI" id="CHEBI:24646"/>
        <dbReference type="ChEBI" id="CHEBI:30839"/>
        <dbReference type="ChEBI" id="CHEBI:30864"/>
        <dbReference type="ChEBI" id="CHEBI:132124"/>
        <dbReference type="EC" id="1.3.5.2"/>
    </reaction>
</comment>
<comment type="cofactor">
    <cofactor evidence="1">
        <name>FMN</name>
        <dbReference type="ChEBI" id="CHEBI:58210"/>
    </cofactor>
    <text evidence="1">Binds 1 FMN per subunit.</text>
</comment>
<comment type="pathway">
    <text evidence="1">Pyrimidine metabolism; UMP biosynthesis via de novo pathway; orotate from (S)-dihydroorotate (quinone route): step 1/1.</text>
</comment>
<comment type="subunit">
    <text evidence="1">Monomer.</text>
</comment>
<comment type="subcellular location">
    <subcellularLocation>
        <location evidence="1">Cell membrane</location>
        <topology evidence="1">Peripheral membrane protein</topology>
    </subcellularLocation>
</comment>
<comment type="similarity">
    <text evidence="1">Belongs to the dihydroorotate dehydrogenase family. Type 2 subfamily.</text>
</comment>